<gene>
    <name type="primary">MYL6</name>
</gene>
<accession>P02607</accession>
<accession>P08296</accession>
<organism>
    <name type="scientific">Gallus gallus</name>
    <name type="common">Chicken</name>
    <dbReference type="NCBI Taxonomy" id="9031"/>
    <lineage>
        <taxon>Eukaryota</taxon>
        <taxon>Metazoa</taxon>
        <taxon>Chordata</taxon>
        <taxon>Craniata</taxon>
        <taxon>Vertebrata</taxon>
        <taxon>Euteleostomi</taxon>
        <taxon>Archelosauria</taxon>
        <taxon>Archosauria</taxon>
        <taxon>Dinosauria</taxon>
        <taxon>Saurischia</taxon>
        <taxon>Theropoda</taxon>
        <taxon>Coelurosauria</taxon>
        <taxon>Aves</taxon>
        <taxon>Neognathae</taxon>
        <taxon>Galloanserae</taxon>
        <taxon>Galliformes</taxon>
        <taxon>Phasianidae</taxon>
        <taxon>Phasianinae</taxon>
        <taxon>Gallus</taxon>
    </lineage>
</organism>
<proteinExistence type="evidence at protein level"/>
<name>MYL6_CHICK</name>
<dbReference type="EMBL" id="M15645">
    <property type="protein sequence ID" value="AAA48978.1"/>
    <property type="molecule type" value="mRNA"/>
</dbReference>
<dbReference type="EMBL" id="M15646">
    <property type="protein sequence ID" value="AAA48979.1"/>
    <property type="molecule type" value="mRNA"/>
</dbReference>
<dbReference type="PIR" id="A28488">
    <property type="entry name" value="MOCHG2"/>
</dbReference>
<dbReference type="PIR" id="B28488">
    <property type="entry name" value="MOCH6N"/>
</dbReference>
<dbReference type="PDB" id="1BR1">
    <property type="method" value="X-ray"/>
    <property type="resolution" value="3.50 A"/>
    <property type="chains" value="B/D/F/H=2-151"/>
</dbReference>
<dbReference type="PDB" id="1BR4">
    <property type="method" value="X-ray"/>
    <property type="resolution" value="3.62 A"/>
    <property type="chains" value="B/D/F/H=2-151"/>
</dbReference>
<dbReference type="PDB" id="1I84">
    <property type="method" value="EM"/>
    <property type="resolution" value="20.00 A"/>
    <property type="chains" value="T/W=2-151"/>
</dbReference>
<dbReference type="PDB" id="3DTP">
    <property type="method" value="EM"/>
    <property type="resolution" value="20.00 A"/>
    <property type="chains" value="C/D=2-151"/>
</dbReference>
<dbReference type="PDB" id="3J04">
    <property type="method" value="EM"/>
    <property type="chains" value="C/F=4-151"/>
</dbReference>
<dbReference type="PDB" id="7MF3">
    <property type="method" value="EM"/>
    <property type="resolution" value="3.40 A"/>
    <property type="chains" value="C/F=2-151"/>
</dbReference>
<dbReference type="PDB" id="8SYF">
    <property type="method" value="EM"/>
    <property type="resolution" value="19.00 A"/>
    <property type="chains" value="E/H=4-151"/>
</dbReference>
<dbReference type="PDBsum" id="1BR1"/>
<dbReference type="PDBsum" id="1BR4"/>
<dbReference type="PDBsum" id="1I84"/>
<dbReference type="PDBsum" id="3DTP"/>
<dbReference type="PDBsum" id="3J04"/>
<dbReference type="PDBsum" id="7MF3"/>
<dbReference type="PDBsum" id="8SYF"/>
<dbReference type="EMDB" id="EMD-23810"/>
<dbReference type="EMDB" id="EMD-29646"/>
<dbReference type="SMR" id="P02607"/>
<dbReference type="FunCoup" id="P02607">
    <property type="interactions" value="1939"/>
</dbReference>
<dbReference type="IntAct" id="P02607">
    <property type="interactions" value="2"/>
</dbReference>
<dbReference type="STRING" id="9031.ENSGALP00000051229"/>
<dbReference type="iPTMnet" id="P02607"/>
<dbReference type="VEuPathDB" id="HostDB:geneid_100996929"/>
<dbReference type="InParanoid" id="P02607"/>
<dbReference type="OrthoDB" id="5959761at2759"/>
<dbReference type="PhylomeDB" id="P02607"/>
<dbReference type="EvolutionaryTrace" id="P02607"/>
<dbReference type="Proteomes" id="UP000000539">
    <property type="component" value="Unassembled WGS sequence"/>
</dbReference>
<dbReference type="GO" id="GO:0042641">
    <property type="term" value="C:actomyosin"/>
    <property type="evidence" value="ECO:0000314"/>
    <property type="project" value="UniProtKB"/>
</dbReference>
<dbReference type="GO" id="GO:0005829">
    <property type="term" value="C:cytosol"/>
    <property type="evidence" value="ECO:0000304"/>
    <property type="project" value="Reactome"/>
</dbReference>
<dbReference type="GO" id="GO:0005859">
    <property type="term" value="C:muscle myosin complex"/>
    <property type="evidence" value="ECO:0000315"/>
    <property type="project" value="CAFA"/>
</dbReference>
<dbReference type="GO" id="GO:0016460">
    <property type="term" value="C:myosin II complex"/>
    <property type="evidence" value="ECO:0000314"/>
    <property type="project" value="UniProtKB"/>
</dbReference>
<dbReference type="GO" id="GO:0097513">
    <property type="term" value="C:myosin II filament"/>
    <property type="evidence" value="ECO:0000314"/>
    <property type="project" value="UniProtKB"/>
</dbReference>
<dbReference type="GO" id="GO:0043531">
    <property type="term" value="F:ADP binding"/>
    <property type="evidence" value="ECO:0000315"/>
    <property type="project" value="CAFA"/>
</dbReference>
<dbReference type="GO" id="GO:0005509">
    <property type="term" value="F:calcium ion binding"/>
    <property type="evidence" value="ECO:0007669"/>
    <property type="project" value="InterPro"/>
</dbReference>
<dbReference type="GO" id="GO:0000287">
    <property type="term" value="F:magnesium ion binding"/>
    <property type="evidence" value="ECO:0000315"/>
    <property type="project" value="CAFA"/>
</dbReference>
<dbReference type="GO" id="GO:0000146">
    <property type="term" value="F:microfilament motor activity"/>
    <property type="evidence" value="ECO:0000250"/>
    <property type="project" value="HGNC-UCL"/>
</dbReference>
<dbReference type="GO" id="GO:0032036">
    <property type="term" value="F:myosin heavy chain binding"/>
    <property type="evidence" value="ECO:0000353"/>
    <property type="project" value="CAFA"/>
</dbReference>
<dbReference type="GO" id="GO:0045159">
    <property type="term" value="F:myosin II binding"/>
    <property type="evidence" value="ECO:0000353"/>
    <property type="project" value="CAFA"/>
</dbReference>
<dbReference type="GO" id="GO:0008307">
    <property type="term" value="F:structural constituent of muscle"/>
    <property type="evidence" value="ECO:0000315"/>
    <property type="project" value="CAFA"/>
</dbReference>
<dbReference type="GO" id="GO:0031032">
    <property type="term" value="P:actomyosin structure organization"/>
    <property type="evidence" value="ECO:0000314"/>
    <property type="project" value="UniProtKB"/>
</dbReference>
<dbReference type="GO" id="GO:0030239">
    <property type="term" value="P:myofibril assembly"/>
    <property type="evidence" value="ECO:0000315"/>
    <property type="project" value="CAFA"/>
</dbReference>
<dbReference type="CDD" id="cd00051">
    <property type="entry name" value="EFh"/>
    <property type="match status" value="1"/>
</dbReference>
<dbReference type="FunFam" id="1.10.238.10:FF:000019">
    <property type="entry name" value="Myosin light chain 1 skeletal"/>
    <property type="match status" value="1"/>
</dbReference>
<dbReference type="FunFam" id="1.10.238.10:FF:000056">
    <property type="entry name" value="Myosin light chain 1 skeletal"/>
    <property type="match status" value="1"/>
</dbReference>
<dbReference type="Gene3D" id="1.10.238.10">
    <property type="entry name" value="EF-hand"/>
    <property type="match status" value="2"/>
</dbReference>
<dbReference type="InterPro" id="IPR050230">
    <property type="entry name" value="CALM/Myosin/TropC-like"/>
</dbReference>
<dbReference type="InterPro" id="IPR011992">
    <property type="entry name" value="EF-hand-dom_pair"/>
</dbReference>
<dbReference type="InterPro" id="IPR002048">
    <property type="entry name" value="EF_hand_dom"/>
</dbReference>
<dbReference type="PANTHER" id="PTHR23048">
    <property type="entry name" value="MYOSIN LIGHT CHAIN 1, 3"/>
    <property type="match status" value="1"/>
</dbReference>
<dbReference type="PANTHER" id="PTHR23048:SF7">
    <property type="entry name" value="SIMILAR TO MYOSIN, LIGHT POLYPEPTIDE 6, ALKALI, SMOOTH MUSCLE AND NON-MUSCLE"/>
    <property type="match status" value="1"/>
</dbReference>
<dbReference type="SMART" id="SM00054">
    <property type="entry name" value="EFh"/>
    <property type="match status" value="2"/>
</dbReference>
<dbReference type="SUPFAM" id="SSF47473">
    <property type="entry name" value="EF-hand"/>
    <property type="match status" value="1"/>
</dbReference>
<dbReference type="PROSITE" id="PS50222">
    <property type="entry name" value="EF_HAND_2"/>
    <property type="match status" value="3"/>
</dbReference>
<sequence length="151" mass="16987">MCDFSEEQTAEFKEAFQLFDRTGDGKILYSQCGDVMRALGQNPTNAEVMKVLGNPKSDEMNLKTLKFEQFLPMMQTIAKNKDQGCFEDYVEGLRVFDKEGNGTVMGAEIRHVLVTLGEKMTEEEVEQLVAGHEDSNGCINYEELVRMVLSG</sequence>
<feature type="initiator methionine" description="Removed" evidence="3">
    <location>
        <position position="1"/>
    </location>
</feature>
<feature type="chain" id="PRO_0000198694" description="Myosin light polypeptide 6">
    <location>
        <begin position="2"/>
        <end position="151"/>
    </location>
</feature>
<feature type="domain" description="EF-hand 1" evidence="1">
    <location>
        <begin position="7"/>
        <end position="42"/>
    </location>
</feature>
<feature type="domain" description="EF-hand 2" evidence="1">
    <location>
        <begin position="84"/>
        <end position="119"/>
    </location>
</feature>
<feature type="domain" description="EF-hand 3" evidence="1">
    <location>
        <begin position="119"/>
        <end position="151"/>
    </location>
</feature>
<feature type="modified residue" description="N-acetylcysteine" evidence="2">
    <location>
        <position position="2"/>
    </location>
</feature>
<feature type="splice variant" id="VSP_017063" description="In isoform 2." evidence="4">
    <original>ELVRMVLSG</original>
    <variation>AFVRHILSG</variation>
    <location>
        <begin position="143"/>
        <end position="151"/>
    </location>
</feature>
<feature type="sequence conflict" description="In Ref. 1; AA sequence and 2; AA sequence." evidence="5" ref="1 2">
    <original>K</original>
    <variation>N</variation>
    <location>
        <position position="66"/>
    </location>
</feature>
<feature type="sequence conflict" description="In Ref. 2; AA sequence." evidence="5" ref="2">
    <original>N</original>
    <variation>D</variation>
    <location>
        <position position="101"/>
    </location>
</feature>
<feature type="helix" evidence="7">
    <location>
        <begin position="6"/>
        <end position="18"/>
    </location>
</feature>
<feature type="strand" evidence="6">
    <location>
        <begin position="21"/>
        <end position="25"/>
    </location>
</feature>
<feature type="helix" evidence="7">
    <location>
        <begin position="29"/>
        <end position="38"/>
    </location>
</feature>
<feature type="helix" evidence="7">
    <location>
        <begin position="47"/>
        <end position="52"/>
    </location>
</feature>
<feature type="helix" evidence="6">
    <location>
        <begin position="57"/>
        <end position="60"/>
    </location>
</feature>
<feature type="helix" evidence="7">
    <location>
        <begin position="67"/>
        <end position="78"/>
    </location>
</feature>
<feature type="helix" evidence="7">
    <location>
        <begin position="86"/>
        <end position="96"/>
    </location>
</feature>
<feature type="strand" evidence="7">
    <location>
        <begin position="98"/>
        <end position="101"/>
    </location>
</feature>
<feature type="helix" evidence="7">
    <location>
        <begin position="106"/>
        <end position="114"/>
    </location>
</feature>
<feature type="strand" evidence="6">
    <location>
        <begin position="116"/>
        <end position="118"/>
    </location>
</feature>
<feature type="helix" evidence="7">
    <location>
        <begin position="123"/>
        <end position="127"/>
    </location>
</feature>
<feature type="strand" evidence="7">
    <location>
        <begin position="130"/>
        <end position="132"/>
    </location>
</feature>
<feature type="strand" evidence="7">
    <location>
        <begin position="135"/>
        <end position="137"/>
    </location>
</feature>
<feature type="helix" evidence="7">
    <location>
        <begin position="142"/>
        <end position="148"/>
    </location>
</feature>
<protein>
    <recommendedName>
        <fullName>Myosin light polypeptide 6</fullName>
    </recommendedName>
    <alternativeName>
        <fullName>G2 catalytic</fullName>
    </alternativeName>
    <alternativeName>
        <fullName>LC17-GI</fullName>
    </alternativeName>
    <alternativeName>
        <fullName>LC17-NM</fullName>
    </alternativeName>
    <alternativeName>
        <fullName>Myosin light chain alkali smooth-muscle/non-muscle isoforms</fullName>
    </alternativeName>
</protein>
<reference key="1">
    <citation type="journal article" date="1981" name="FEBS Lett.">
        <title>Amino acid sequences of the cardiac L-2A, L-2B and gizzard 17 000-Mr light chains of chicken muscle myosin.</title>
        <authorList>
            <person name="Matsuda G."/>
            <person name="Maita T."/>
            <person name="Kato Y."/>
            <person name="Chen J."/>
            <person name="Umegane T."/>
        </authorList>
    </citation>
    <scope>PROTEIN SEQUENCE (ISOFORM 1)</scope>
</reference>
<reference key="2">
    <citation type="journal article" date="1983" name="Biochem. J.">
        <title>Preparation of the alkali and P light chains of chicken gizzard myosin. Amino acid sequence of the alkali light chain.</title>
        <authorList>
            <person name="Grand R.J."/>
            <person name="Perry S.V."/>
        </authorList>
    </citation>
    <scope>PROTEIN SEQUENCE (ISOFORM 1)</scope>
    <scope>ACETYLATION AT CYS-2</scope>
</reference>
<reference key="3">
    <citation type="journal article" date="1987" name="J. Biol. Chem.">
        <title>Nonmuscle and smooth muscle myosin light chain mRNAs are generated from a single gene by the tissue-specific alternative RNA splicing.</title>
        <authorList>
            <person name="Nabeshima Y."/>
            <person name="Nabeshima Y."/>
            <person name="Nonomura Y."/>
            <person name="Fujii-Kuriyama Y."/>
        </authorList>
    </citation>
    <scope>NUCLEOTIDE SEQUENCE [MRNA] (ISOFORMS 1 AND 2)</scope>
    <source>
        <tissue>Fibroblast</tissue>
        <tissue>Gizzard</tissue>
    </source>
</reference>
<reference key="4">
    <citation type="journal article" date="1998" name="Cell">
        <title>Crystal structure of a vertebrate smooth muscle myosin motor domain and its complex with the essential light chain: visualization of the pre-power stroke state.</title>
        <authorList>
            <person name="Dominguez R."/>
            <person name="Freyzon Y."/>
            <person name="Trybus K.M."/>
            <person name="Cohen C."/>
        </authorList>
    </citation>
    <scope>X-RAY CRYSTALLOGRAPHY (3.5 ANGSTROMS) (ISOFORM 1)</scope>
</reference>
<keyword id="KW-0002">3D-structure</keyword>
<keyword id="KW-0007">Acetylation</keyword>
<keyword id="KW-0025">Alternative splicing</keyword>
<keyword id="KW-0903">Direct protein sequencing</keyword>
<keyword id="KW-0505">Motor protein</keyword>
<keyword id="KW-0514">Muscle protein</keyword>
<keyword id="KW-0518">Myosin</keyword>
<keyword id="KW-1185">Reference proteome</keyword>
<keyword id="KW-0677">Repeat</keyword>
<evidence type="ECO:0000255" key="1">
    <source>
        <dbReference type="PROSITE-ProRule" id="PRU00448"/>
    </source>
</evidence>
<evidence type="ECO:0000269" key="2">
    <source>
    </source>
</evidence>
<evidence type="ECO:0000269" key="3">
    <source>
    </source>
</evidence>
<evidence type="ECO:0000303" key="4">
    <source>
    </source>
</evidence>
<evidence type="ECO:0000305" key="5"/>
<evidence type="ECO:0007829" key="6">
    <source>
        <dbReference type="PDB" id="1BR1"/>
    </source>
</evidence>
<evidence type="ECO:0007829" key="7">
    <source>
        <dbReference type="PDB" id="7MF3"/>
    </source>
</evidence>
<comment type="function">
    <text>Regulatory light chain of myosin. Does not bind calcium.</text>
</comment>
<comment type="subunit">
    <text>Myosin is a hexamer of 2 heavy chains and 4 light chains.</text>
</comment>
<comment type="interaction">
    <interactant intactId="EBI-1027073">
        <id>P02607</id>
    </interactant>
    <interactant intactId="EBI-1027098">
        <id>P10587</id>
        <label>MYH11</label>
    </interactant>
    <organismsDiffer>false</organismsDiffer>
    <experiments>2</experiments>
</comment>
<comment type="alternative products">
    <event type="alternative splicing"/>
    <isoform>
        <id>P02607-1</id>
        <name>1</name>
        <name>Smooth muscle</name>
        <name>MLC3sm</name>
        <sequence type="displayed"/>
    </isoform>
    <isoform>
        <id>P02607-2</id>
        <id>P08296-1</id>
        <name>2</name>
        <name>Non-muscle</name>
        <name>MLC3nm</name>
        <sequence type="described" ref="VSP_017063"/>
    </isoform>
</comment>